<name>BURP5_ORYSJ</name>
<protein>
    <recommendedName>
        <fullName>BURP domain-containing protein 5</fullName>
        <shortName>OsBURP05</shortName>
    </recommendedName>
</protein>
<sequence length="324" mass="34974">MCATLCTLLDEISILILMLLLIQLEIRVSAAQGGGSHAAMSPEQYWRSILPDSTPMPISISQLLGDGYPYSPAVGLPKRGDRVQIRYGPNIYGLAASQQFFKDPTMGLFFLETNLQSSKSIKLHFANMMAGTKFLPRGEADAVPFSSKDLQEILARFGVRPGSVDASVVKNTLLECELPANKGEKKACATSLESMVDFVASSLGTRDIKAASTFLVGKDGDTPAQEYTVTGARRMAETGQLIACHPESYPYAVFMCHLTEATRAYKASLVGKDGAAVEAVAVCHTDTAEWNPKHAAFQVLGVKPGTVPVCHFVQPDVVVWTRRG</sequence>
<proteinExistence type="evidence at transcript level"/>
<evidence type="ECO:0000255" key="1"/>
<evidence type="ECO:0000255" key="2">
    <source>
        <dbReference type="PROSITE-ProRule" id="PRU00604"/>
    </source>
</evidence>
<evidence type="ECO:0000269" key="3">
    <source>
    </source>
</evidence>
<evidence type="ECO:0000305" key="4"/>
<gene>
    <name type="primary">BURP5</name>
    <name type="ordered locus">Os04g0225700</name>
    <name type="ordered locus">LOC_Os04g14990</name>
    <name type="ORF">OsJ_13897</name>
    <name type="ORF">OSJNBa0036B17.11</name>
</gene>
<organism>
    <name type="scientific">Oryza sativa subsp. japonica</name>
    <name type="common">Rice</name>
    <dbReference type="NCBI Taxonomy" id="39947"/>
    <lineage>
        <taxon>Eukaryota</taxon>
        <taxon>Viridiplantae</taxon>
        <taxon>Streptophyta</taxon>
        <taxon>Embryophyta</taxon>
        <taxon>Tracheophyta</taxon>
        <taxon>Spermatophyta</taxon>
        <taxon>Magnoliopsida</taxon>
        <taxon>Liliopsida</taxon>
        <taxon>Poales</taxon>
        <taxon>Poaceae</taxon>
        <taxon>BOP clade</taxon>
        <taxon>Oryzoideae</taxon>
        <taxon>Oryzeae</taxon>
        <taxon>Oryzinae</taxon>
        <taxon>Oryza</taxon>
        <taxon>Oryza sativa</taxon>
    </lineage>
</organism>
<reference key="1">
    <citation type="journal article" date="2002" name="Nature">
        <title>Sequence and analysis of rice chromosome 4.</title>
        <authorList>
            <person name="Feng Q."/>
            <person name="Zhang Y."/>
            <person name="Hao P."/>
            <person name="Wang S."/>
            <person name="Fu G."/>
            <person name="Huang Y."/>
            <person name="Li Y."/>
            <person name="Zhu J."/>
            <person name="Liu Y."/>
            <person name="Hu X."/>
            <person name="Jia P."/>
            <person name="Zhang Y."/>
            <person name="Zhao Q."/>
            <person name="Ying K."/>
            <person name="Yu S."/>
            <person name="Tang Y."/>
            <person name="Weng Q."/>
            <person name="Zhang L."/>
            <person name="Lu Y."/>
            <person name="Mu J."/>
            <person name="Lu Y."/>
            <person name="Zhang L.S."/>
            <person name="Yu Z."/>
            <person name="Fan D."/>
            <person name="Liu X."/>
            <person name="Lu T."/>
            <person name="Li C."/>
            <person name="Wu Y."/>
            <person name="Sun T."/>
            <person name="Lei H."/>
            <person name="Li T."/>
            <person name="Hu H."/>
            <person name="Guan J."/>
            <person name="Wu M."/>
            <person name="Zhang R."/>
            <person name="Zhou B."/>
            <person name="Chen Z."/>
            <person name="Chen L."/>
            <person name="Jin Z."/>
            <person name="Wang R."/>
            <person name="Yin H."/>
            <person name="Cai Z."/>
            <person name="Ren S."/>
            <person name="Lv G."/>
            <person name="Gu W."/>
            <person name="Zhu G."/>
            <person name="Tu Y."/>
            <person name="Jia J."/>
            <person name="Zhang Y."/>
            <person name="Chen J."/>
            <person name="Kang H."/>
            <person name="Chen X."/>
            <person name="Shao C."/>
            <person name="Sun Y."/>
            <person name="Hu Q."/>
            <person name="Zhang X."/>
            <person name="Zhang W."/>
            <person name="Wang L."/>
            <person name="Ding C."/>
            <person name="Sheng H."/>
            <person name="Gu J."/>
            <person name="Chen S."/>
            <person name="Ni L."/>
            <person name="Zhu F."/>
            <person name="Chen W."/>
            <person name="Lan L."/>
            <person name="Lai Y."/>
            <person name="Cheng Z."/>
            <person name="Gu M."/>
            <person name="Jiang J."/>
            <person name="Li J."/>
            <person name="Hong G."/>
            <person name="Xue Y."/>
            <person name="Han B."/>
        </authorList>
    </citation>
    <scope>NUCLEOTIDE SEQUENCE [LARGE SCALE GENOMIC DNA]</scope>
    <source>
        <strain>cv. Nipponbare</strain>
    </source>
</reference>
<reference key="2">
    <citation type="journal article" date="2005" name="Nature">
        <title>The map-based sequence of the rice genome.</title>
        <authorList>
            <consortium name="International rice genome sequencing project (IRGSP)"/>
        </authorList>
    </citation>
    <scope>NUCLEOTIDE SEQUENCE [LARGE SCALE GENOMIC DNA]</scope>
    <source>
        <strain>cv. Nipponbare</strain>
    </source>
</reference>
<reference key="3">
    <citation type="journal article" date="2008" name="Nucleic Acids Res.">
        <title>The rice annotation project database (RAP-DB): 2008 update.</title>
        <authorList>
            <consortium name="The rice annotation project (RAP)"/>
        </authorList>
    </citation>
    <scope>GENOME REANNOTATION</scope>
    <source>
        <strain>cv. Nipponbare</strain>
    </source>
</reference>
<reference key="4">
    <citation type="journal article" date="2013" name="Rice">
        <title>Improvement of the Oryza sativa Nipponbare reference genome using next generation sequence and optical map data.</title>
        <authorList>
            <person name="Kawahara Y."/>
            <person name="de la Bastide M."/>
            <person name="Hamilton J.P."/>
            <person name="Kanamori H."/>
            <person name="McCombie W.R."/>
            <person name="Ouyang S."/>
            <person name="Schwartz D.C."/>
            <person name="Tanaka T."/>
            <person name="Wu J."/>
            <person name="Zhou S."/>
            <person name="Childs K.L."/>
            <person name="Davidson R.M."/>
            <person name="Lin H."/>
            <person name="Quesada-Ocampo L."/>
            <person name="Vaillancourt B."/>
            <person name="Sakai H."/>
            <person name="Lee S.S."/>
            <person name="Kim J."/>
            <person name="Numa H."/>
            <person name="Itoh T."/>
            <person name="Buell C.R."/>
            <person name="Matsumoto T."/>
        </authorList>
    </citation>
    <scope>GENOME REANNOTATION</scope>
    <source>
        <strain>cv. Nipponbare</strain>
    </source>
</reference>
<reference key="5">
    <citation type="journal article" date="2005" name="PLoS Biol.">
        <title>The genomes of Oryza sativa: a history of duplications.</title>
        <authorList>
            <person name="Yu J."/>
            <person name="Wang J."/>
            <person name="Lin W."/>
            <person name="Li S."/>
            <person name="Li H."/>
            <person name="Zhou J."/>
            <person name="Ni P."/>
            <person name="Dong W."/>
            <person name="Hu S."/>
            <person name="Zeng C."/>
            <person name="Zhang J."/>
            <person name="Zhang Y."/>
            <person name="Li R."/>
            <person name="Xu Z."/>
            <person name="Li S."/>
            <person name="Li X."/>
            <person name="Zheng H."/>
            <person name="Cong L."/>
            <person name="Lin L."/>
            <person name="Yin J."/>
            <person name="Geng J."/>
            <person name="Li G."/>
            <person name="Shi J."/>
            <person name="Liu J."/>
            <person name="Lv H."/>
            <person name="Li J."/>
            <person name="Wang J."/>
            <person name="Deng Y."/>
            <person name="Ran L."/>
            <person name="Shi X."/>
            <person name="Wang X."/>
            <person name="Wu Q."/>
            <person name="Li C."/>
            <person name="Ren X."/>
            <person name="Wang J."/>
            <person name="Wang X."/>
            <person name="Li D."/>
            <person name="Liu D."/>
            <person name="Zhang X."/>
            <person name="Ji Z."/>
            <person name="Zhao W."/>
            <person name="Sun Y."/>
            <person name="Zhang Z."/>
            <person name="Bao J."/>
            <person name="Han Y."/>
            <person name="Dong L."/>
            <person name="Ji J."/>
            <person name="Chen P."/>
            <person name="Wu S."/>
            <person name="Liu J."/>
            <person name="Xiao Y."/>
            <person name="Bu D."/>
            <person name="Tan J."/>
            <person name="Yang L."/>
            <person name="Ye C."/>
            <person name="Zhang J."/>
            <person name="Xu J."/>
            <person name="Zhou Y."/>
            <person name="Yu Y."/>
            <person name="Zhang B."/>
            <person name="Zhuang S."/>
            <person name="Wei H."/>
            <person name="Liu B."/>
            <person name="Lei M."/>
            <person name="Yu H."/>
            <person name="Li Y."/>
            <person name="Xu H."/>
            <person name="Wei S."/>
            <person name="He X."/>
            <person name="Fang L."/>
            <person name="Zhang Z."/>
            <person name="Zhang Y."/>
            <person name="Huang X."/>
            <person name="Su Z."/>
            <person name="Tong W."/>
            <person name="Li J."/>
            <person name="Tong Z."/>
            <person name="Li S."/>
            <person name="Ye J."/>
            <person name="Wang L."/>
            <person name="Fang L."/>
            <person name="Lei T."/>
            <person name="Chen C.-S."/>
            <person name="Chen H.-C."/>
            <person name="Xu Z."/>
            <person name="Li H."/>
            <person name="Huang H."/>
            <person name="Zhang F."/>
            <person name="Xu H."/>
            <person name="Li N."/>
            <person name="Zhao C."/>
            <person name="Li S."/>
            <person name="Dong L."/>
            <person name="Huang Y."/>
            <person name="Li L."/>
            <person name="Xi Y."/>
            <person name="Qi Q."/>
            <person name="Li W."/>
            <person name="Zhang B."/>
            <person name="Hu W."/>
            <person name="Zhang Y."/>
            <person name="Tian X."/>
            <person name="Jiao Y."/>
            <person name="Liang X."/>
            <person name="Jin J."/>
            <person name="Gao L."/>
            <person name="Zheng W."/>
            <person name="Hao B."/>
            <person name="Liu S.-M."/>
            <person name="Wang W."/>
            <person name="Yuan L."/>
            <person name="Cao M."/>
            <person name="McDermott J."/>
            <person name="Samudrala R."/>
            <person name="Wang J."/>
            <person name="Wong G.K.-S."/>
            <person name="Yang H."/>
        </authorList>
    </citation>
    <scope>NUCLEOTIDE SEQUENCE [LARGE SCALE GENOMIC DNA]</scope>
    <source>
        <strain>cv. Nipponbare</strain>
    </source>
</reference>
<reference key="6">
    <citation type="journal article" date="2009" name="Planta">
        <title>Genome-wide identification of BURP domain-containing genes in rice reveals a gene family with diverse structures and responses to abiotic stresses.</title>
        <authorList>
            <person name="Ding X."/>
            <person name="Hou X."/>
            <person name="Xie K."/>
            <person name="Xiong L."/>
        </authorList>
    </citation>
    <scope>TISSUE SPECIFICITY</scope>
    <scope>GENE NOMENCLATURE</scope>
</reference>
<keyword id="KW-1185">Reference proteome</keyword>
<keyword id="KW-0732">Signal</keyword>
<dbReference type="EMBL" id="AL731592">
    <property type="protein sequence ID" value="CAD39857.2"/>
    <property type="status" value="ALT_SEQ"/>
    <property type="molecule type" value="Genomic_DNA"/>
</dbReference>
<dbReference type="EMBL" id="AP008210">
    <property type="protein sequence ID" value="BAF14194.1"/>
    <property type="status" value="ALT_SEQ"/>
    <property type="molecule type" value="Genomic_DNA"/>
</dbReference>
<dbReference type="EMBL" id="AP014960">
    <property type="status" value="NOT_ANNOTATED_CDS"/>
    <property type="molecule type" value="Genomic_DNA"/>
</dbReference>
<dbReference type="EMBL" id="CM000141">
    <property type="protein sequence ID" value="EAZ29834.1"/>
    <property type="status" value="ALT_SEQ"/>
    <property type="molecule type" value="Genomic_DNA"/>
</dbReference>
<dbReference type="RefSeq" id="XP_015634739.1">
    <property type="nucleotide sequence ID" value="XM_015779253.1"/>
</dbReference>
<dbReference type="SMR" id="Q0JEP3"/>
<dbReference type="FunCoup" id="Q0JEP3">
    <property type="interactions" value="269"/>
</dbReference>
<dbReference type="STRING" id="39947.Q0JEP3"/>
<dbReference type="PaxDb" id="39947-Q0JEP3"/>
<dbReference type="KEGG" id="dosa:Os04g0225700"/>
<dbReference type="KEGG" id="osa:4335212"/>
<dbReference type="eggNOG" id="ENOG502QQHP">
    <property type="taxonomic scope" value="Eukaryota"/>
</dbReference>
<dbReference type="HOGENOM" id="CLU_011822_1_1_1"/>
<dbReference type="InParanoid" id="Q0JEP3"/>
<dbReference type="OrthoDB" id="780559at2759"/>
<dbReference type="Proteomes" id="UP000000763">
    <property type="component" value="Chromosome 4"/>
</dbReference>
<dbReference type="Proteomes" id="UP000007752">
    <property type="component" value="Chromosome 4"/>
</dbReference>
<dbReference type="Proteomes" id="UP000059680">
    <property type="component" value="Chromosome 4"/>
</dbReference>
<dbReference type="InterPro" id="IPR044816">
    <property type="entry name" value="BURP"/>
</dbReference>
<dbReference type="InterPro" id="IPR004873">
    <property type="entry name" value="BURP_dom"/>
</dbReference>
<dbReference type="PANTHER" id="PTHR31236:SF2">
    <property type="entry name" value="BURP DOMAIN PROTEIN RD22"/>
    <property type="match status" value="1"/>
</dbReference>
<dbReference type="PANTHER" id="PTHR31236">
    <property type="entry name" value="BURP DOMAIN PROTEIN USPL1-LIKE"/>
    <property type="match status" value="1"/>
</dbReference>
<dbReference type="Pfam" id="PF03181">
    <property type="entry name" value="BURP"/>
    <property type="match status" value="1"/>
</dbReference>
<dbReference type="SMART" id="SM01045">
    <property type="entry name" value="BURP"/>
    <property type="match status" value="1"/>
</dbReference>
<dbReference type="PROSITE" id="PS51277">
    <property type="entry name" value="BURP"/>
    <property type="match status" value="1"/>
</dbReference>
<accession>Q0JEP3</accession>
<accession>Q7XWY1</accession>
<feature type="signal peptide" evidence="1">
    <location>
        <begin position="1"/>
        <end position="30"/>
    </location>
</feature>
<feature type="chain" id="PRO_0000375832" description="BURP domain-containing protein 5">
    <location>
        <begin position="31"/>
        <end position="324"/>
    </location>
</feature>
<feature type="domain" description="BURP" evidence="2">
    <location>
        <begin position="109"/>
        <end position="323"/>
    </location>
</feature>
<comment type="tissue specificity">
    <text evidence="3">Expressed in panicles.</text>
</comment>
<comment type="sequence caution" evidence="4">
    <conflict type="erroneous gene model prediction">
        <sequence resource="EMBL-CDS" id="BAF14194"/>
    </conflict>
</comment>
<comment type="sequence caution" evidence="4">
    <conflict type="erroneous gene model prediction">
        <sequence resource="EMBL-CDS" id="CAD39857"/>
    </conflict>
</comment>
<comment type="sequence caution" evidence="4">
    <conflict type="erroneous gene model prediction">
        <sequence resource="EMBL-CDS" id="EAZ29834"/>
    </conflict>
</comment>